<dbReference type="EC" id="1.23.1.-"/>
<dbReference type="EMBL" id="AL023094">
    <property type="protein sequence ID" value="CAA18833.1"/>
    <property type="molecule type" value="Genomic_DNA"/>
</dbReference>
<dbReference type="EMBL" id="AL161585">
    <property type="protein sequence ID" value="CAB80171.1"/>
    <property type="molecule type" value="Genomic_DNA"/>
</dbReference>
<dbReference type="EMBL" id="CP002687">
    <property type="protein sequence ID" value="AEE86390.1"/>
    <property type="molecule type" value="Genomic_DNA"/>
</dbReference>
<dbReference type="PIR" id="T05274">
    <property type="entry name" value="T05274"/>
</dbReference>
<dbReference type="RefSeq" id="NP_195180.1">
    <property type="nucleotide sequence ID" value="NM_119619.2"/>
</dbReference>
<dbReference type="SMR" id="O65679"/>
<dbReference type="FunCoup" id="O65679">
    <property type="interactions" value="162"/>
</dbReference>
<dbReference type="STRING" id="3702.O65679"/>
<dbReference type="PaxDb" id="3702-AT4G34540.1"/>
<dbReference type="ProteomicsDB" id="236159"/>
<dbReference type="EnsemblPlants" id="AT4G34540.1">
    <property type="protein sequence ID" value="AT4G34540.1"/>
    <property type="gene ID" value="AT4G34540"/>
</dbReference>
<dbReference type="GeneID" id="829605"/>
<dbReference type="Gramene" id="AT4G34540.1">
    <property type="protein sequence ID" value="AT4G34540.1"/>
    <property type="gene ID" value="AT4G34540"/>
</dbReference>
<dbReference type="KEGG" id="ath:AT4G34540"/>
<dbReference type="Araport" id="AT4G34540"/>
<dbReference type="TAIR" id="AT4G34540">
    <property type="gene designation" value="GVS1"/>
</dbReference>
<dbReference type="eggNOG" id="ENOG502QTF0">
    <property type="taxonomic scope" value="Eukaryota"/>
</dbReference>
<dbReference type="HOGENOM" id="CLU_060833_0_0_1"/>
<dbReference type="InParanoid" id="O65679"/>
<dbReference type="OMA" id="TPYPENM"/>
<dbReference type="PhylomeDB" id="O65679"/>
<dbReference type="BioCyc" id="ARA:AT4G34540-MONOMER"/>
<dbReference type="PRO" id="PR:O65679"/>
<dbReference type="Proteomes" id="UP000006548">
    <property type="component" value="Chromosome 4"/>
</dbReference>
<dbReference type="ExpressionAtlas" id="O65679">
    <property type="expression patterns" value="baseline and differential"/>
</dbReference>
<dbReference type="GO" id="GO:0010283">
    <property type="term" value="F:pinoresinol reductase activity"/>
    <property type="evidence" value="ECO:0000250"/>
    <property type="project" value="TAIR"/>
</dbReference>
<dbReference type="GO" id="GO:1900057">
    <property type="term" value="P:positive regulation of leaf senescence"/>
    <property type="evidence" value="ECO:0000315"/>
    <property type="project" value="TAIR"/>
</dbReference>
<dbReference type="GO" id="GO:0033194">
    <property type="term" value="P:response to hydroperoxide"/>
    <property type="evidence" value="ECO:0000315"/>
    <property type="project" value="TAIR"/>
</dbReference>
<dbReference type="CDD" id="cd05259">
    <property type="entry name" value="PCBER_SDR_a"/>
    <property type="match status" value="1"/>
</dbReference>
<dbReference type="Gene3D" id="3.40.50.720">
    <property type="entry name" value="NAD(P)-binding Rossmann-like Domain"/>
    <property type="match status" value="1"/>
</dbReference>
<dbReference type="Gene3D" id="3.90.25.10">
    <property type="entry name" value="UDP-galactose 4-epimerase, domain 1"/>
    <property type="match status" value="1"/>
</dbReference>
<dbReference type="InterPro" id="IPR036291">
    <property type="entry name" value="NAD(P)-bd_dom_sf"/>
</dbReference>
<dbReference type="InterPro" id="IPR008030">
    <property type="entry name" value="NmrA-like"/>
</dbReference>
<dbReference type="InterPro" id="IPR050608">
    <property type="entry name" value="NmrA-type/Isoflavone_red_sf"/>
</dbReference>
<dbReference type="InterPro" id="IPR045312">
    <property type="entry name" value="PCBER-like"/>
</dbReference>
<dbReference type="PANTHER" id="PTHR43349">
    <property type="entry name" value="PINORESINOL REDUCTASE-RELATED"/>
    <property type="match status" value="1"/>
</dbReference>
<dbReference type="PANTHER" id="PTHR43349:SF34">
    <property type="entry name" value="PINORESINOL-LARICIRESINOL REDUCTASE 3-RELATED"/>
    <property type="match status" value="1"/>
</dbReference>
<dbReference type="Pfam" id="PF05368">
    <property type="entry name" value="NmrA"/>
    <property type="match status" value="1"/>
</dbReference>
<dbReference type="SUPFAM" id="SSF51735">
    <property type="entry name" value="NAD(P)-binding Rossmann-fold domains"/>
    <property type="match status" value="1"/>
</dbReference>
<protein>
    <recommendedName>
        <fullName>Probable pinoresinol-lariciresinol reductase 3</fullName>
        <shortName>AtPLR3</shortName>
        <ecNumber>1.23.1.-</ecNumber>
    </recommendedName>
    <alternativeName>
        <fullName>lariciresinol reductase</fullName>
    </alternativeName>
</protein>
<gene>
    <name type="primary">PLR3</name>
    <name type="ordered locus">At4g34540</name>
    <name type="ORF">T4L20.120</name>
</gene>
<evidence type="ECO:0000250" key="1"/>
<evidence type="ECO:0000250" key="2">
    <source>
        <dbReference type="UniProtKB" id="Q9LD14"/>
    </source>
</evidence>
<evidence type="ECO:0000305" key="3"/>
<keyword id="KW-0521">NADP</keyword>
<keyword id="KW-0560">Oxidoreductase</keyword>
<keyword id="KW-1185">Reference proteome</keyword>
<reference key="1">
    <citation type="journal article" date="1999" name="Nature">
        <title>Sequence and analysis of chromosome 4 of the plant Arabidopsis thaliana.</title>
        <authorList>
            <person name="Mayer K.F.X."/>
            <person name="Schueller C."/>
            <person name="Wambutt R."/>
            <person name="Murphy G."/>
            <person name="Volckaert G."/>
            <person name="Pohl T."/>
            <person name="Duesterhoeft A."/>
            <person name="Stiekema W."/>
            <person name="Entian K.-D."/>
            <person name="Terryn N."/>
            <person name="Harris B."/>
            <person name="Ansorge W."/>
            <person name="Brandt P."/>
            <person name="Grivell L.A."/>
            <person name="Rieger M."/>
            <person name="Weichselgartner M."/>
            <person name="de Simone V."/>
            <person name="Obermaier B."/>
            <person name="Mache R."/>
            <person name="Mueller M."/>
            <person name="Kreis M."/>
            <person name="Delseny M."/>
            <person name="Puigdomenech P."/>
            <person name="Watson M."/>
            <person name="Schmidtheini T."/>
            <person name="Reichert B."/>
            <person name="Portetelle D."/>
            <person name="Perez-Alonso M."/>
            <person name="Boutry M."/>
            <person name="Bancroft I."/>
            <person name="Vos P."/>
            <person name="Hoheisel J."/>
            <person name="Zimmermann W."/>
            <person name="Wedler H."/>
            <person name="Ridley P."/>
            <person name="Langham S.-A."/>
            <person name="McCullagh B."/>
            <person name="Bilham L."/>
            <person name="Robben J."/>
            <person name="van der Schueren J."/>
            <person name="Grymonprez B."/>
            <person name="Chuang Y.-J."/>
            <person name="Vandenbussche F."/>
            <person name="Braeken M."/>
            <person name="Weltjens I."/>
            <person name="Voet M."/>
            <person name="Bastiaens I."/>
            <person name="Aert R."/>
            <person name="Defoor E."/>
            <person name="Weitzenegger T."/>
            <person name="Bothe G."/>
            <person name="Ramsperger U."/>
            <person name="Hilbert H."/>
            <person name="Braun M."/>
            <person name="Holzer E."/>
            <person name="Brandt A."/>
            <person name="Peters S."/>
            <person name="van Staveren M."/>
            <person name="Dirkse W."/>
            <person name="Mooijman P."/>
            <person name="Klein Lankhorst R."/>
            <person name="Rose M."/>
            <person name="Hauf J."/>
            <person name="Koetter P."/>
            <person name="Berneiser S."/>
            <person name="Hempel S."/>
            <person name="Feldpausch M."/>
            <person name="Lamberth S."/>
            <person name="Van den Daele H."/>
            <person name="De Keyser A."/>
            <person name="Buysshaert C."/>
            <person name="Gielen J."/>
            <person name="Villarroel R."/>
            <person name="De Clercq R."/>
            <person name="van Montagu M."/>
            <person name="Rogers J."/>
            <person name="Cronin A."/>
            <person name="Quail M.A."/>
            <person name="Bray-Allen S."/>
            <person name="Clark L."/>
            <person name="Doggett J."/>
            <person name="Hall S."/>
            <person name="Kay M."/>
            <person name="Lennard N."/>
            <person name="McLay K."/>
            <person name="Mayes R."/>
            <person name="Pettett A."/>
            <person name="Rajandream M.A."/>
            <person name="Lyne M."/>
            <person name="Benes V."/>
            <person name="Rechmann S."/>
            <person name="Borkova D."/>
            <person name="Bloecker H."/>
            <person name="Scharfe M."/>
            <person name="Grimm M."/>
            <person name="Loehnert T.-H."/>
            <person name="Dose S."/>
            <person name="de Haan M."/>
            <person name="Maarse A.C."/>
            <person name="Schaefer M."/>
            <person name="Mueller-Auer S."/>
            <person name="Gabel C."/>
            <person name="Fuchs M."/>
            <person name="Fartmann B."/>
            <person name="Granderath K."/>
            <person name="Dauner D."/>
            <person name="Herzl A."/>
            <person name="Neumann S."/>
            <person name="Argiriou A."/>
            <person name="Vitale D."/>
            <person name="Liguori R."/>
            <person name="Piravandi E."/>
            <person name="Massenet O."/>
            <person name="Quigley F."/>
            <person name="Clabauld G."/>
            <person name="Muendlein A."/>
            <person name="Felber R."/>
            <person name="Schnabl S."/>
            <person name="Hiller R."/>
            <person name="Schmidt W."/>
            <person name="Lecharny A."/>
            <person name="Aubourg S."/>
            <person name="Chefdor F."/>
            <person name="Cooke R."/>
            <person name="Berger C."/>
            <person name="Monfort A."/>
            <person name="Casacuberta E."/>
            <person name="Gibbons T."/>
            <person name="Weber N."/>
            <person name="Vandenbol M."/>
            <person name="Bargues M."/>
            <person name="Terol J."/>
            <person name="Torres A."/>
            <person name="Perez-Perez A."/>
            <person name="Purnelle B."/>
            <person name="Bent E."/>
            <person name="Johnson S."/>
            <person name="Tacon D."/>
            <person name="Jesse T."/>
            <person name="Heijnen L."/>
            <person name="Schwarz S."/>
            <person name="Scholler P."/>
            <person name="Heber S."/>
            <person name="Francs P."/>
            <person name="Bielke C."/>
            <person name="Frishman D."/>
            <person name="Haase D."/>
            <person name="Lemcke K."/>
            <person name="Mewes H.-W."/>
            <person name="Stocker S."/>
            <person name="Zaccaria P."/>
            <person name="Bevan M."/>
            <person name="Wilson R.K."/>
            <person name="de la Bastide M."/>
            <person name="Habermann K."/>
            <person name="Parnell L."/>
            <person name="Dedhia N."/>
            <person name="Gnoj L."/>
            <person name="Schutz K."/>
            <person name="Huang E."/>
            <person name="Spiegel L."/>
            <person name="Sekhon M."/>
            <person name="Murray J."/>
            <person name="Sheet P."/>
            <person name="Cordes M."/>
            <person name="Abu-Threideh J."/>
            <person name="Stoneking T."/>
            <person name="Kalicki J."/>
            <person name="Graves T."/>
            <person name="Harmon G."/>
            <person name="Edwards J."/>
            <person name="Latreille P."/>
            <person name="Courtney L."/>
            <person name="Cloud J."/>
            <person name="Abbott A."/>
            <person name="Scott K."/>
            <person name="Johnson D."/>
            <person name="Minx P."/>
            <person name="Bentley D."/>
            <person name="Fulton B."/>
            <person name="Miller N."/>
            <person name="Greco T."/>
            <person name="Kemp K."/>
            <person name="Kramer J."/>
            <person name="Fulton L."/>
            <person name="Mardis E."/>
            <person name="Dante M."/>
            <person name="Pepin K."/>
            <person name="Hillier L.W."/>
            <person name="Nelson J."/>
            <person name="Spieth J."/>
            <person name="Ryan E."/>
            <person name="Andrews S."/>
            <person name="Geisel C."/>
            <person name="Layman D."/>
            <person name="Du H."/>
            <person name="Ali J."/>
            <person name="Berghoff A."/>
            <person name="Jones K."/>
            <person name="Drone K."/>
            <person name="Cotton M."/>
            <person name="Joshu C."/>
            <person name="Antonoiu B."/>
            <person name="Zidanic M."/>
            <person name="Strong C."/>
            <person name="Sun H."/>
            <person name="Lamar B."/>
            <person name="Yordan C."/>
            <person name="Ma P."/>
            <person name="Zhong J."/>
            <person name="Preston R."/>
            <person name="Vil D."/>
            <person name="Shekher M."/>
            <person name="Matero A."/>
            <person name="Shah R."/>
            <person name="Swaby I.K."/>
            <person name="O'Shaughnessy A."/>
            <person name="Rodriguez M."/>
            <person name="Hoffman J."/>
            <person name="Till S."/>
            <person name="Granat S."/>
            <person name="Shohdy N."/>
            <person name="Hasegawa A."/>
            <person name="Hameed A."/>
            <person name="Lodhi M."/>
            <person name="Johnson A."/>
            <person name="Chen E."/>
            <person name="Marra M.A."/>
            <person name="Martienssen R."/>
            <person name="McCombie W.R."/>
        </authorList>
    </citation>
    <scope>NUCLEOTIDE SEQUENCE [LARGE SCALE GENOMIC DNA]</scope>
    <source>
        <strain>cv. Columbia</strain>
    </source>
</reference>
<reference key="2">
    <citation type="journal article" date="2017" name="Plant J.">
        <title>Araport11: a complete reannotation of the Arabidopsis thaliana reference genome.</title>
        <authorList>
            <person name="Cheng C.Y."/>
            <person name="Krishnakumar V."/>
            <person name="Chan A.P."/>
            <person name="Thibaud-Nissen F."/>
            <person name="Schobel S."/>
            <person name="Town C.D."/>
        </authorList>
    </citation>
    <scope>GENOME REANNOTATION</scope>
    <source>
        <strain>cv. Columbia</strain>
    </source>
</reference>
<comment type="function">
    <text>Probable reductase that might be involved in the reduction of lariciresinol into secoisolariciresinol. In most plant species, a single enzyme is able to reduce both pinoresinol and lariciresinol efficiently while in Arabidopsis, PRR1 and PRR2 show a strict substrate selectivity for pinoresinol.</text>
</comment>
<comment type="subunit">
    <text evidence="1">Dimer.</text>
</comment>
<comment type="similarity">
    <text evidence="3">Belongs to the NmrA-type oxidoreductase family. Isoflavone reductase subfamily.</text>
</comment>
<sequence length="306" mass="34071">MEEEKKKSRVLIIGATGRLGNYLTRFSIESGHPTFALIRNTTLSDKLKSLSDAGVTLLKGSLEDEGSLAEAVSKVDVVISAIPSKHVLDQKLLVRVIKQAGSIKRFIPAEYGANPDKTQVSDLDHDFYSKKSEIRHMIESEGIPYTYICCGLFMRVLLPSLVQPGLQSPPTDKVTVFGDGNVKAVFVNDVDVAAFTIKTIDDPRTLNKTLYLSPPGNICSMNDLVELWEGKIEKKLEKTFATENQLLKKIKETPYPDNMEMVFIYSVFIKGDHTYFDIESCGGVNGTELYPDVKYMTVSEFLDTLL</sequence>
<name>PILR3_ARATH</name>
<organism>
    <name type="scientific">Arabidopsis thaliana</name>
    <name type="common">Mouse-ear cress</name>
    <dbReference type="NCBI Taxonomy" id="3702"/>
    <lineage>
        <taxon>Eukaryota</taxon>
        <taxon>Viridiplantae</taxon>
        <taxon>Streptophyta</taxon>
        <taxon>Embryophyta</taxon>
        <taxon>Tracheophyta</taxon>
        <taxon>Spermatophyta</taxon>
        <taxon>Magnoliopsida</taxon>
        <taxon>eudicotyledons</taxon>
        <taxon>Gunneridae</taxon>
        <taxon>Pentapetalae</taxon>
        <taxon>rosids</taxon>
        <taxon>malvids</taxon>
        <taxon>Brassicales</taxon>
        <taxon>Brassicaceae</taxon>
        <taxon>Camelineae</taxon>
        <taxon>Arabidopsis</taxon>
    </lineage>
</organism>
<accession>O65679</accession>
<feature type="chain" id="PRO_0000422931" description="Probable pinoresinol-lariciresinol reductase 3">
    <location>
        <begin position="1"/>
        <end position="306"/>
    </location>
</feature>
<feature type="active site" description="Proton acceptor" evidence="2">
    <location>
        <position position="131"/>
    </location>
</feature>
<feature type="binding site" evidence="2">
    <location>
        <begin position="14"/>
        <end position="20"/>
    </location>
    <ligand>
        <name>NADP(+)</name>
        <dbReference type="ChEBI" id="CHEBI:58349"/>
    </ligand>
</feature>
<feature type="binding site" evidence="2">
    <location>
        <position position="39"/>
    </location>
    <ligand>
        <name>NADP(+)</name>
        <dbReference type="ChEBI" id="CHEBI:58349"/>
    </ligand>
</feature>
<feature type="binding site" evidence="2">
    <location>
        <position position="46"/>
    </location>
    <ligand>
        <name>NADP(+)</name>
        <dbReference type="ChEBI" id="CHEBI:58349"/>
    </ligand>
</feature>
<feature type="binding site" evidence="2">
    <location>
        <position position="135"/>
    </location>
    <ligand>
        <name>NADP(+)</name>
        <dbReference type="ChEBI" id="CHEBI:58349"/>
    </ligand>
</feature>
<proteinExistence type="inferred from homology"/>